<proteinExistence type="inferred from homology"/>
<feature type="chain" id="PRO_0000198950" description="GTP-binding RHO-like protein">
    <location>
        <begin position="1"/>
        <end position="343"/>
    </location>
</feature>
<feature type="propeptide" id="PRO_0000281280" description="Removed in mature form" evidence="1">
    <location>
        <begin position="344"/>
        <end position="346"/>
    </location>
</feature>
<feature type="region of interest" description="Disordered" evidence="2">
    <location>
        <begin position="1"/>
        <end position="25"/>
    </location>
</feature>
<feature type="region of interest" description="Disordered" evidence="2">
    <location>
        <begin position="259"/>
        <end position="294"/>
    </location>
</feature>
<feature type="short sequence motif" description="Effector region" evidence="1">
    <location>
        <begin position="104"/>
        <end position="112"/>
    </location>
</feature>
<feature type="compositionally biased region" description="Basic residues" evidence="2">
    <location>
        <begin position="1"/>
        <end position="10"/>
    </location>
</feature>
<feature type="compositionally biased region" description="Polar residues" evidence="2">
    <location>
        <begin position="16"/>
        <end position="25"/>
    </location>
</feature>
<feature type="binding site" evidence="1">
    <location>
        <begin position="82"/>
        <end position="89"/>
    </location>
    <ligand>
        <name>GTP</name>
        <dbReference type="ChEBI" id="CHEBI:37565"/>
    </ligand>
</feature>
<feature type="binding site" evidence="1">
    <location>
        <begin position="130"/>
        <end position="134"/>
    </location>
    <ligand>
        <name>GTP</name>
        <dbReference type="ChEBI" id="CHEBI:37565"/>
    </ligand>
</feature>
<feature type="binding site" evidence="1">
    <location>
        <begin position="188"/>
        <end position="191"/>
    </location>
    <ligand>
        <name>GTP</name>
        <dbReference type="ChEBI" id="CHEBI:37565"/>
    </ligand>
</feature>
<feature type="modified residue" description="Cysteine methyl ester" evidence="1">
    <location>
        <position position="343"/>
    </location>
</feature>
<feature type="lipid moiety-binding region" description="S-geranylgeranyl cysteine" evidence="1">
    <location>
        <position position="343"/>
    </location>
</feature>
<accession>P33153</accession>
<accession>C4YFB9</accession>
<protein>
    <recommendedName>
        <fullName>GTP-binding RHO-like protein</fullName>
    </recommendedName>
</protein>
<keyword id="KW-1003">Cell membrane</keyword>
<keyword id="KW-0342">GTP-binding</keyword>
<keyword id="KW-0449">Lipoprotein</keyword>
<keyword id="KW-0472">Membrane</keyword>
<keyword id="KW-0488">Methylation</keyword>
<keyword id="KW-0547">Nucleotide-binding</keyword>
<keyword id="KW-0636">Prenylation</keyword>
<dbReference type="EMBL" id="M83991">
    <property type="protein sequence ID" value="AAA34337.2"/>
    <property type="molecule type" value="Genomic_DNA"/>
</dbReference>
<dbReference type="EMBL" id="CH672346">
    <property type="protein sequence ID" value="EEQ43005.1"/>
    <property type="molecule type" value="Genomic_DNA"/>
</dbReference>
<dbReference type="PIR" id="D47211">
    <property type="entry name" value="D47211"/>
</dbReference>
<dbReference type="SMR" id="P33153"/>
<dbReference type="PaxDb" id="5476-P33153"/>
<dbReference type="VEuPathDB" id="FungiDB:CAWG_01235"/>
<dbReference type="HOGENOM" id="CLU_041217_21_1_1"/>
<dbReference type="OMA" id="KDTWFPE"/>
<dbReference type="OrthoDB" id="11171at766764"/>
<dbReference type="Proteomes" id="UP000001429">
    <property type="component" value="Chromosome 1, Supercontig 1.1"/>
</dbReference>
<dbReference type="GO" id="GO:0005886">
    <property type="term" value="C:plasma membrane"/>
    <property type="evidence" value="ECO:0007669"/>
    <property type="project" value="UniProtKB-SubCell"/>
</dbReference>
<dbReference type="GO" id="GO:0005525">
    <property type="term" value="F:GTP binding"/>
    <property type="evidence" value="ECO:0007669"/>
    <property type="project" value="UniProtKB-KW"/>
</dbReference>
<dbReference type="GO" id="GO:0003924">
    <property type="term" value="F:GTPase activity"/>
    <property type="evidence" value="ECO:0007669"/>
    <property type="project" value="InterPro"/>
</dbReference>
<dbReference type="GO" id="GO:0007264">
    <property type="term" value="P:small GTPase-mediated signal transduction"/>
    <property type="evidence" value="ECO:0007669"/>
    <property type="project" value="InterPro"/>
</dbReference>
<dbReference type="CDD" id="cd04132">
    <property type="entry name" value="Rho4_like"/>
    <property type="match status" value="1"/>
</dbReference>
<dbReference type="FunFam" id="3.40.50.300:FF:000983">
    <property type="entry name" value="Rho family GTPase"/>
    <property type="match status" value="1"/>
</dbReference>
<dbReference type="Gene3D" id="3.40.50.300">
    <property type="entry name" value="P-loop containing nucleotide triphosphate hydrolases"/>
    <property type="match status" value="1"/>
</dbReference>
<dbReference type="InterPro" id="IPR027417">
    <property type="entry name" value="P-loop_NTPase"/>
</dbReference>
<dbReference type="InterPro" id="IPR005225">
    <property type="entry name" value="Small_GTP-bd"/>
</dbReference>
<dbReference type="InterPro" id="IPR001806">
    <property type="entry name" value="Small_GTPase"/>
</dbReference>
<dbReference type="InterPro" id="IPR003578">
    <property type="entry name" value="Small_GTPase_Rho"/>
</dbReference>
<dbReference type="NCBIfam" id="TIGR00231">
    <property type="entry name" value="small_GTP"/>
    <property type="match status" value="1"/>
</dbReference>
<dbReference type="PANTHER" id="PTHR24072">
    <property type="entry name" value="RHO FAMILY GTPASE"/>
    <property type="match status" value="1"/>
</dbReference>
<dbReference type="Pfam" id="PF00071">
    <property type="entry name" value="Ras"/>
    <property type="match status" value="1"/>
</dbReference>
<dbReference type="PRINTS" id="PR00449">
    <property type="entry name" value="RASTRNSFRMNG"/>
</dbReference>
<dbReference type="SMART" id="SM00175">
    <property type="entry name" value="RAB"/>
    <property type="match status" value="1"/>
</dbReference>
<dbReference type="SMART" id="SM00176">
    <property type="entry name" value="RAN"/>
    <property type="match status" value="1"/>
</dbReference>
<dbReference type="SMART" id="SM00173">
    <property type="entry name" value="RAS"/>
    <property type="match status" value="1"/>
</dbReference>
<dbReference type="SMART" id="SM00174">
    <property type="entry name" value="RHO"/>
    <property type="match status" value="1"/>
</dbReference>
<dbReference type="SUPFAM" id="SSF52540">
    <property type="entry name" value="P-loop containing nucleoside triphosphate hydrolases"/>
    <property type="match status" value="1"/>
</dbReference>
<dbReference type="PROSITE" id="PS51420">
    <property type="entry name" value="RHO"/>
    <property type="match status" value="1"/>
</dbReference>
<sequence length="346" mass="39090">MTPNGSRRHSAYMGSPRSQHSSTMETGYNPYEAVQKKQELYQNNNGNSPTVIIEEDPYIPNYKESSLANKKTNYNMKIVVVGDGGCGKTCLLLAYTQNKFPSIYVPTVFENYVTAVQSPNGKTVELALWDTAGQEEYDRLRPLSYPDVDILLVCFAVDNEVSLENVKDMWFPEVNHYCPGIPIILVGTKSDLSSDMNHDASIRVAKEIGAIGLIFTSAKTMFNVRTVFNFALNHFQRNMELQEQYEKTLGSRKRISRVLGGSNGGSGNHSRHHSRNYSNVSNNRRGHLKNTSYDSTALLDQPLTEDTYVKNPYGNFGYKANVESPYNQDEFAFTRERKKKKKCVIL</sequence>
<gene>
    <name type="primary">CRL1</name>
    <name type="synonym">RHO4</name>
    <name type="ORF">CAWG_01235</name>
</gene>
<name>CRL1_CANAW</name>
<reference key="1">
    <citation type="journal article" date="1992" name="Proc. Natl. Acad. Sci. U.S.A.">
        <title>Dominant negative selection of heterologous genes: isolation of Candida albicans genes that interfere with Saccharomyces cerevisiae mating factor-induced cell cycle arrest.</title>
        <authorList>
            <person name="Whiteway M."/>
            <person name="Dignard D."/>
            <person name="Thomas D.Y."/>
        </authorList>
    </citation>
    <scope>NUCLEOTIDE SEQUENCE [GENOMIC DNA]</scope>
    <source>
        <strain>WO-1</strain>
    </source>
</reference>
<reference key="2">
    <citation type="journal article" date="2009" name="Nature">
        <title>Evolution of pathogenicity and sexual reproduction in eight Candida genomes.</title>
        <authorList>
            <person name="Butler G."/>
            <person name="Rasmussen M.D."/>
            <person name="Lin M.F."/>
            <person name="Santos M.A.S."/>
            <person name="Sakthikumar S."/>
            <person name="Munro C.A."/>
            <person name="Rheinbay E."/>
            <person name="Grabherr M."/>
            <person name="Forche A."/>
            <person name="Reedy J.L."/>
            <person name="Agrafioti I."/>
            <person name="Arnaud M.B."/>
            <person name="Bates S."/>
            <person name="Brown A.J.P."/>
            <person name="Brunke S."/>
            <person name="Costanzo M.C."/>
            <person name="Fitzpatrick D.A."/>
            <person name="de Groot P.W.J."/>
            <person name="Harris D."/>
            <person name="Hoyer L.L."/>
            <person name="Hube B."/>
            <person name="Klis F.M."/>
            <person name="Kodira C."/>
            <person name="Lennard N."/>
            <person name="Logue M.E."/>
            <person name="Martin R."/>
            <person name="Neiman A.M."/>
            <person name="Nikolaou E."/>
            <person name="Quail M.A."/>
            <person name="Quinn J."/>
            <person name="Santos M.C."/>
            <person name="Schmitzberger F.F."/>
            <person name="Sherlock G."/>
            <person name="Shah P."/>
            <person name="Silverstein K.A.T."/>
            <person name="Skrzypek M.S."/>
            <person name="Soll D."/>
            <person name="Staggs R."/>
            <person name="Stansfield I."/>
            <person name="Stumpf M.P.H."/>
            <person name="Sudbery P.E."/>
            <person name="Srikantha T."/>
            <person name="Zeng Q."/>
            <person name="Berman J."/>
            <person name="Berriman M."/>
            <person name="Heitman J."/>
            <person name="Gow N.A.R."/>
            <person name="Lorenz M.C."/>
            <person name="Birren B.W."/>
            <person name="Kellis M."/>
            <person name="Cuomo C.A."/>
        </authorList>
    </citation>
    <scope>NUCLEOTIDE SEQUENCE [LARGE SCALE GENOMIC DNA]</scope>
    <source>
        <strain>WO-1</strain>
    </source>
</reference>
<comment type="subcellular location">
    <subcellularLocation>
        <location evidence="3">Cell membrane</location>
        <topology evidence="3">Lipid-anchor</topology>
        <orientation evidence="3">Cytoplasmic side</orientation>
    </subcellularLocation>
</comment>
<comment type="similarity">
    <text evidence="3">Belongs to the small GTPase superfamily. Rho family.</text>
</comment>
<organism>
    <name type="scientific">Candida albicans (strain WO-1)</name>
    <name type="common">Yeast</name>
    <dbReference type="NCBI Taxonomy" id="294748"/>
    <lineage>
        <taxon>Eukaryota</taxon>
        <taxon>Fungi</taxon>
        <taxon>Dikarya</taxon>
        <taxon>Ascomycota</taxon>
        <taxon>Saccharomycotina</taxon>
        <taxon>Pichiomycetes</taxon>
        <taxon>Debaryomycetaceae</taxon>
        <taxon>Candida/Lodderomyces clade</taxon>
        <taxon>Candida</taxon>
    </lineage>
</organism>
<evidence type="ECO:0000250" key="1"/>
<evidence type="ECO:0000256" key="2">
    <source>
        <dbReference type="SAM" id="MobiDB-lite"/>
    </source>
</evidence>
<evidence type="ECO:0000305" key="3"/>